<evidence type="ECO:0000250" key="1"/>
<evidence type="ECO:0000255" key="2">
    <source>
        <dbReference type="PROSITE-ProRule" id="PRU01251"/>
    </source>
</evidence>
<evidence type="ECO:0000305" key="3"/>
<keyword id="KW-0067">ATP-binding</keyword>
<keyword id="KW-0143">Chaperone</keyword>
<keyword id="KW-0175">Coiled coil</keyword>
<keyword id="KW-0963">Cytoplasm</keyword>
<keyword id="KW-0547">Nucleotide-binding</keyword>
<keyword id="KW-1185">Reference proteome</keyword>
<keyword id="KW-0677">Repeat</keyword>
<keyword id="KW-0346">Stress response</keyword>
<reference key="1">
    <citation type="journal article" date="2003" name="Proc. Natl. Acad. Sci. U.S.A.">
        <title>The complete genome sequence of Chromobacterium violaceum reveals remarkable and exploitable bacterial adaptability.</title>
        <authorList>
            <person name="Vasconcelos A.T.R."/>
            <person name="de Almeida D.F."/>
            <person name="Hungria M."/>
            <person name="Guimaraes C.T."/>
            <person name="Antonio R.V."/>
            <person name="Almeida F.C."/>
            <person name="de Almeida L.G.P."/>
            <person name="de Almeida R."/>
            <person name="Alves-Gomes J.A."/>
            <person name="Andrade E.M."/>
            <person name="Araripe J."/>
            <person name="de Araujo M.F.F."/>
            <person name="Astolfi-Filho S."/>
            <person name="Azevedo V."/>
            <person name="Baptista A.J."/>
            <person name="Bataus L.A.M."/>
            <person name="Batista J.S."/>
            <person name="Belo A."/>
            <person name="van den Berg C."/>
            <person name="Bogo M."/>
            <person name="Bonatto S."/>
            <person name="Bordignon J."/>
            <person name="Brigido M.M."/>
            <person name="Brito C.A."/>
            <person name="Brocchi M."/>
            <person name="Burity H.A."/>
            <person name="Camargo A.A."/>
            <person name="Cardoso D.D.P."/>
            <person name="Carneiro N.P."/>
            <person name="Carraro D.M."/>
            <person name="Carvalho C.M.B."/>
            <person name="Cascardo J.C.M."/>
            <person name="Cavada B.S."/>
            <person name="Chueire L.M.O."/>
            <person name="Creczynski-Pasa T.B."/>
            <person name="Cunha-Junior N.C."/>
            <person name="Fagundes N."/>
            <person name="Falcao C.L."/>
            <person name="Fantinatti F."/>
            <person name="Farias I.P."/>
            <person name="Felipe M.S.S."/>
            <person name="Ferrari L.P."/>
            <person name="Ferro J.A."/>
            <person name="Ferro M.I.T."/>
            <person name="Franco G.R."/>
            <person name="Freitas N.S.A."/>
            <person name="Furlan L.R."/>
            <person name="Gazzinelli R.T."/>
            <person name="Gomes E.A."/>
            <person name="Goncalves P.R."/>
            <person name="Grangeiro T.B."/>
            <person name="Grattapaglia D."/>
            <person name="Grisard E.C."/>
            <person name="Hanna E.S."/>
            <person name="Jardim S.N."/>
            <person name="Laurino J."/>
            <person name="Leoi L.C.T."/>
            <person name="Lima L.F.A."/>
            <person name="Loureiro M.F."/>
            <person name="Lyra M.C.C.P."/>
            <person name="Madeira H.M.F."/>
            <person name="Manfio G.P."/>
            <person name="Maranhao A.Q."/>
            <person name="Martins W.S."/>
            <person name="di Mauro S.M.Z."/>
            <person name="de Medeiros S.R.B."/>
            <person name="Meissner R.V."/>
            <person name="Moreira M.A.M."/>
            <person name="Nascimento F.F."/>
            <person name="Nicolas M.F."/>
            <person name="Oliveira J.G."/>
            <person name="Oliveira S.C."/>
            <person name="Paixao R.F.C."/>
            <person name="Parente J.A."/>
            <person name="Pedrosa F.O."/>
            <person name="Pena S.D.J."/>
            <person name="Pereira J.O."/>
            <person name="Pereira M."/>
            <person name="Pinto L.S.R.C."/>
            <person name="Pinto L.S."/>
            <person name="Porto J.I.R."/>
            <person name="Potrich D.P."/>
            <person name="Ramalho-Neto C.E."/>
            <person name="Reis A.M.M."/>
            <person name="Rigo L.U."/>
            <person name="Rondinelli E."/>
            <person name="Santos E.B.P."/>
            <person name="Santos F.R."/>
            <person name="Schneider M.P.C."/>
            <person name="Seuanez H.N."/>
            <person name="Silva A.M.R."/>
            <person name="da Silva A.L.C."/>
            <person name="Silva D.W."/>
            <person name="Silva R."/>
            <person name="Simoes I.C."/>
            <person name="Simon D."/>
            <person name="Soares C.M.A."/>
            <person name="Soares R.B.A."/>
            <person name="Souza E.M."/>
            <person name="Souza K.R.L."/>
            <person name="Souza R.C."/>
            <person name="Steffens M.B.R."/>
            <person name="Steindel M."/>
            <person name="Teixeira S.R."/>
            <person name="Urmenyi T."/>
            <person name="Vettore A."/>
            <person name="Wassem R."/>
            <person name="Zaha A."/>
            <person name="Simpson A.J.G."/>
        </authorList>
    </citation>
    <scope>NUCLEOTIDE SEQUENCE [LARGE SCALE GENOMIC DNA]</scope>
    <source>
        <strain>ATCC 12472 / DSM 30191 / JCM 1249 / CCUG 213 / NBRC 12614 / NCIMB 9131 / NCTC 9757 / MK</strain>
    </source>
</reference>
<gene>
    <name type="primary">clpB</name>
    <name type="ordered locus">CV_1944</name>
</gene>
<sequence>MRFDKLTTKFQQALGDAQSLAVANDNPYIEPQHLLLAMLDDAEAGVGGLLARAGVNVPALKAGLKQAIDRLPRVQGHGGEITVSRDLANLLNIADKIAMKLGDEFIASELYLSALSQDKGEAGRLLKEHGGNHASIQAAIDAVRGGESVNSADAEGQREALKKYTMDLTERARQGKLDPVIGRDDEIRRAIQVLQRRTKNNPVLIGEPGVGKTAIVEGLAQRIVNGEVPESLKNKRLLVLDLAALIAGAKYRGEFEERLKAVLNDLSKDDGQTLIFIDEIHTLVGAGKADGAMDAGNMLKPALARGELHCIGATTLDEYRKYIEKDAALERRFQKVLVGEPSVEDTIAILRGLQEKYEIHHGVDITDPAIVAAAELSQRYITDRFLPDKAIDLIDEAASRIKMELDSKPEAMDKLDRRLIQLKIEREAVNKESDEASQKRLKLIEDEIAELSREYADLEEIWKAEKAAQQGSQSIKEEIDRLKVDMEELKRKGDWQKLAELQYGKLPQLEARLKEAESAGDKGEAKPNRLLRTQVGAEEIAEVVSRATGIPVSKMLTGEREKLLKMEDVLHQRVVGQDEAVSAVADAIRRSRSGLADPNKPYGSFLFLGPTGVGKTELCKTLASFLFDSKDHLIRIDMSEYMEKHSVARLIGAPPGYVGYEEGGYLTEQVRRKPYSVILLDEVEKAHPDVFNVLLQVLDDGRLTDGQGRTVDFKNTVIVMTSNIGSQQIQAMATDDYQVIKLAVMAEVKTQFRPEFINRIDEVVVFHGLDEKHIQSIARIQLKSLENRLAKLELSLQISDEALALLSEAGFDPVYGARPLKRAIQAELENPLAKAILAGKYPPKATVMVEARNGQLAFA</sequence>
<name>CLPB_CHRVO</name>
<comment type="function">
    <text evidence="1">Part of a stress-induced multi-chaperone system, it is involved in the recovery of the cell from heat-induced damage, in cooperation with DnaK, DnaJ and GrpE. Acts before DnaK, in the processing of protein aggregates. Protein binding stimulates the ATPase activity; ATP hydrolysis unfolds the denatured protein aggregates, which probably helps expose new hydrophobic binding sites on the surface of ClpB-bound aggregates, contributing to the solubilization and refolding of denatured protein aggregates by DnaK (By similarity).</text>
</comment>
<comment type="subunit">
    <text evidence="1">Homohexamer. The oligomerization is ATP-dependent (By similarity).</text>
</comment>
<comment type="subcellular location">
    <subcellularLocation>
        <location evidence="3">Cytoplasm</location>
    </subcellularLocation>
</comment>
<comment type="domain">
    <text evidence="1">The Clp repeat (R) domain probably functions as a substrate-discriminating domain, recruiting aggregated proteins to the ClpB hexamer and/or stabilizing bound proteins. The NBD2 domain is responsible for oligomerization, whereas the NBD1 domain stabilizes the hexamer probably in an ATP-dependent manner. The movement of the coiled-coil domain is essential for ClpB ability to rescue proteins from an aggregated state, probably by pulling apart large aggregated proteins, which are bound between the coiled-coils motifs of adjacent ClpB subunits in the functional hexamer (By similarity).</text>
</comment>
<comment type="similarity">
    <text evidence="3">Belongs to the ClpA/ClpB family.</text>
</comment>
<organism>
    <name type="scientific">Chromobacterium violaceum (strain ATCC 12472 / DSM 30191 / JCM 1249 / CCUG 213 / NBRC 12614 / NCIMB 9131 / NCTC 9757 / MK)</name>
    <dbReference type="NCBI Taxonomy" id="243365"/>
    <lineage>
        <taxon>Bacteria</taxon>
        <taxon>Pseudomonadati</taxon>
        <taxon>Pseudomonadota</taxon>
        <taxon>Betaproteobacteria</taxon>
        <taxon>Neisseriales</taxon>
        <taxon>Chromobacteriaceae</taxon>
        <taxon>Chromobacterium</taxon>
    </lineage>
</organism>
<proteinExistence type="inferred from homology"/>
<accession>Q7NWN7</accession>
<feature type="chain" id="PRO_0000191110" description="Chaperone protein ClpB">
    <location>
        <begin position="1"/>
        <end position="859"/>
    </location>
</feature>
<feature type="domain" description="Clp R" evidence="2">
    <location>
        <begin position="3"/>
        <end position="146"/>
    </location>
</feature>
<feature type="region of interest" description="Repeat 1" evidence="2">
    <location>
        <begin position="6"/>
        <end position="71"/>
    </location>
</feature>
<feature type="region of interest" description="Repeat 2" evidence="2">
    <location>
        <begin position="83"/>
        <end position="146"/>
    </location>
</feature>
<feature type="region of interest" description="NBD1" evidence="1">
    <location>
        <begin position="159"/>
        <end position="340"/>
    </location>
</feature>
<feature type="region of interest" description="Linker" evidence="1">
    <location>
        <begin position="341"/>
        <end position="549"/>
    </location>
</feature>
<feature type="region of interest" description="NBD2" evidence="1">
    <location>
        <begin position="559"/>
        <end position="768"/>
    </location>
</feature>
<feature type="region of interest" description="C-terminal" evidence="1">
    <location>
        <begin position="769"/>
        <end position="859"/>
    </location>
</feature>
<feature type="coiled-coil region" evidence="1">
    <location>
        <begin position="391"/>
        <end position="525"/>
    </location>
</feature>
<feature type="binding site" evidence="1">
    <location>
        <begin position="206"/>
        <end position="213"/>
    </location>
    <ligand>
        <name>ATP</name>
        <dbReference type="ChEBI" id="CHEBI:30616"/>
        <label>1</label>
    </ligand>
</feature>
<feature type="binding site" evidence="1">
    <location>
        <begin position="609"/>
        <end position="616"/>
    </location>
    <ligand>
        <name>ATP</name>
        <dbReference type="ChEBI" id="CHEBI:30616"/>
        <label>2</label>
    </ligand>
</feature>
<dbReference type="EMBL" id="AE016825">
    <property type="protein sequence ID" value="AAQ59618.1"/>
    <property type="molecule type" value="Genomic_DNA"/>
</dbReference>
<dbReference type="RefSeq" id="WP_011135495.1">
    <property type="nucleotide sequence ID" value="NC_005085.1"/>
</dbReference>
<dbReference type="SMR" id="Q7NWN7"/>
<dbReference type="STRING" id="243365.CV_1944"/>
<dbReference type="KEGG" id="cvi:CV_1944"/>
<dbReference type="eggNOG" id="COG0542">
    <property type="taxonomic scope" value="Bacteria"/>
</dbReference>
<dbReference type="HOGENOM" id="CLU_005070_4_0_4"/>
<dbReference type="OrthoDB" id="9803641at2"/>
<dbReference type="Proteomes" id="UP000001424">
    <property type="component" value="Chromosome"/>
</dbReference>
<dbReference type="GO" id="GO:0005737">
    <property type="term" value="C:cytoplasm"/>
    <property type="evidence" value="ECO:0007669"/>
    <property type="project" value="UniProtKB-SubCell"/>
</dbReference>
<dbReference type="GO" id="GO:0005524">
    <property type="term" value="F:ATP binding"/>
    <property type="evidence" value="ECO:0007669"/>
    <property type="project" value="UniProtKB-KW"/>
</dbReference>
<dbReference type="GO" id="GO:0016887">
    <property type="term" value="F:ATP hydrolysis activity"/>
    <property type="evidence" value="ECO:0007669"/>
    <property type="project" value="InterPro"/>
</dbReference>
<dbReference type="GO" id="GO:0034605">
    <property type="term" value="P:cellular response to heat"/>
    <property type="evidence" value="ECO:0007669"/>
    <property type="project" value="TreeGrafter"/>
</dbReference>
<dbReference type="GO" id="GO:0042026">
    <property type="term" value="P:protein refolding"/>
    <property type="evidence" value="ECO:0007669"/>
    <property type="project" value="InterPro"/>
</dbReference>
<dbReference type="CDD" id="cd00009">
    <property type="entry name" value="AAA"/>
    <property type="match status" value="1"/>
</dbReference>
<dbReference type="CDD" id="cd19499">
    <property type="entry name" value="RecA-like_ClpB_Hsp104-like"/>
    <property type="match status" value="1"/>
</dbReference>
<dbReference type="FunFam" id="1.10.8.60:FF:000017">
    <property type="entry name" value="ATP-dependent chaperone ClpB"/>
    <property type="match status" value="1"/>
</dbReference>
<dbReference type="FunFam" id="3.40.50.300:FF:000120">
    <property type="entry name" value="ATP-dependent chaperone ClpB"/>
    <property type="match status" value="1"/>
</dbReference>
<dbReference type="FunFam" id="3.40.50.300:FF:000025">
    <property type="entry name" value="ATP-dependent Clp protease subunit"/>
    <property type="match status" value="1"/>
</dbReference>
<dbReference type="FunFam" id="3.40.50.300:FF:000010">
    <property type="entry name" value="Chaperone clpB 1, putative"/>
    <property type="match status" value="1"/>
</dbReference>
<dbReference type="Gene3D" id="1.10.8.60">
    <property type="match status" value="1"/>
</dbReference>
<dbReference type="Gene3D" id="1.10.1780.10">
    <property type="entry name" value="Clp, N-terminal domain"/>
    <property type="match status" value="1"/>
</dbReference>
<dbReference type="Gene3D" id="3.40.50.300">
    <property type="entry name" value="P-loop containing nucleotide triphosphate hydrolases"/>
    <property type="match status" value="3"/>
</dbReference>
<dbReference type="InterPro" id="IPR003593">
    <property type="entry name" value="AAA+_ATPase"/>
</dbReference>
<dbReference type="InterPro" id="IPR003959">
    <property type="entry name" value="ATPase_AAA_core"/>
</dbReference>
<dbReference type="InterPro" id="IPR017730">
    <property type="entry name" value="Chaperonin_ClpB"/>
</dbReference>
<dbReference type="InterPro" id="IPR019489">
    <property type="entry name" value="Clp_ATPase_C"/>
</dbReference>
<dbReference type="InterPro" id="IPR036628">
    <property type="entry name" value="Clp_N_dom_sf"/>
</dbReference>
<dbReference type="InterPro" id="IPR004176">
    <property type="entry name" value="Clp_R_dom"/>
</dbReference>
<dbReference type="InterPro" id="IPR001270">
    <property type="entry name" value="ClpA/B"/>
</dbReference>
<dbReference type="InterPro" id="IPR018368">
    <property type="entry name" value="ClpA/B_CS1"/>
</dbReference>
<dbReference type="InterPro" id="IPR028299">
    <property type="entry name" value="ClpA/B_CS2"/>
</dbReference>
<dbReference type="InterPro" id="IPR041546">
    <property type="entry name" value="ClpA/ClpB_AAA_lid"/>
</dbReference>
<dbReference type="InterPro" id="IPR050130">
    <property type="entry name" value="ClpA_ClpB"/>
</dbReference>
<dbReference type="InterPro" id="IPR027417">
    <property type="entry name" value="P-loop_NTPase"/>
</dbReference>
<dbReference type="NCBIfam" id="TIGR03346">
    <property type="entry name" value="chaperone_ClpB"/>
    <property type="match status" value="1"/>
</dbReference>
<dbReference type="PANTHER" id="PTHR11638">
    <property type="entry name" value="ATP-DEPENDENT CLP PROTEASE"/>
    <property type="match status" value="1"/>
</dbReference>
<dbReference type="PANTHER" id="PTHR11638:SF18">
    <property type="entry name" value="HEAT SHOCK PROTEIN 104"/>
    <property type="match status" value="1"/>
</dbReference>
<dbReference type="Pfam" id="PF00004">
    <property type="entry name" value="AAA"/>
    <property type="match status" value="1"/>
</dbReference>
<dbReference type="Pfam" id="PF07724">
    <property type="entry name" value="AAA_2"/>
    <property type="match status" value="1"/>
</dbReference>
<dbReference type="Pfam" id="PF17871">
    <property type="entry name" value="AAA_lid_9"/>
    <property type="match status" value="1"/>
</dbReference>
<dbReference type="Pfam" id="PF02861">
    <property type="entry name" value="Clp_N"/>
    <property type="match status" value="2"/>
</dbReference>
<dbReference type="Pfam" id="PF10431">
    <property type="entry name" value="ClpB_D2-small"/>
    <property type="match status" value="1"/>
</dbReference>
<dbReference type="PRINTS" id="PR00300">
    <property type="entry name" value="CLPPROTEASEA"/>
</dbReference>
<dbReference type="SMART" id="SM00382">
    <property type="entry name" value="AAA"/>
    <property type="match status" value="2"/>
</dbReference>
<dbReference type="SMART" id="SM01086">
    <property type="entry name" value="ClpB_D2-small"/>
    <property type="match status" value="1"/>
</dbReference>
<dbReference type="SUPFAM" id="SSF81923">
    <property type="entry name" value="Double Clp-N motif"/>
    <property type="match status" value="1"/>
</dbReference>
<dbReference type="SUPFAM" id="SSF52540">
    <property type="entry name" value="P-loop containing nucleoside triphosphate hydrolases"/>
    <property type="match status" value="2"/>
</dbReference>
<dbReference type="PROSITE" id="PS51903">
    <property type="entry name" value="CLP_R"/>
    <property type="match status" value="1"/>
</dbReference>
<dbReference type="PROSITE" id="PS00870">
    <property type="entry name" value="CLPAB_1"/>
    <property type="match status" value="1"/>
</dbReference>
<dbReference type="PROSITE" id="PS00871">
    <property type="entry name" value="CLPAB_2"/>
    <property type="match status" value="1"/>
</dbReference>
<protein>
    <recommendedName>
        <fullName>Chaperone protein ClpB</fullName>
    </recommendedName>
</protein>